<accession>B0TX36</accession>
<comment type="function">
    <text evidence="1">Catalyzes the NADPH-dependent reduction of glutamyl-tRNA(Glu) to glutamate 1-semialdehyde (GSA).</text>
</comment>
<comment type="catalytic activity">
    <reaction evidence="1">
        <text>(S)-4-amino-5-oxopentanoate + tRNA(Glu) + NADP(+) = L-glutamyl-tRNA(Glu) + NADPH + H(+)</text>
        <dbReference type="Rhea" id="RHEA:12344"/>
        <dbReference type="Rhea" id="RHEA-COMP:9663"/>
        <dbReference type="Rhea" id="RHEA-COMP:9680"/>
        <dbReference type="ChEBI" id="CHEBI:15378"/>
        <dbReference type="ChEBI" id="CHEBI:57501"/>
        <dbReference type="ChEBI" id="CHEBI:57783"/>
        <dbReference type="ChEBI" id="CHEBI:58349"/>
        <dbReference type="ChEBI" id="CHEBI:78442"/>
        <dbReference type="ChEBI" id="CHEBI:78520"/>
        <dbReference type="EC" id="1.2.1.70"/>
    </reaction>
</comment>
<comment type="pathway">
    <text evidence="1">Porphyrin-containing compound metabolism; protoporphyrin-IX biosynthesis; 5-aminolevulinate from L-glutamyl-tRNA(Glu): step 1/2.</text>
</comment>
<comment type="subunit">
    <text evidence="1">Homodimer.</text>
</comment>
<comment type="domain">
    <text evidence="1">Possesses an unusual extended V-shaped dimeric structure with each monomer consisting of three distinct domains arranged along a curved 'spinal' alpha-helix. The N-terminal catalytic domain specifically recognizes the glutamate moiety of the substrate. The second domain is the NADPH-binding domain, and the third C-terminal domain is responsible for dimerization.</text>
</comment>
<comment type="miscellaneous">
    <text evidence="1">During catalysis, the active site Cys acts as a nucleophile attacking the alpha-carbonyl group of tRNA-bound glutamate with the formation of a thioester intermediate between enzyme and glutamate, and the concomitant release of tRNA(Glu). The thioester intermediate is finally reduced by direct hydride transfer from NADPH, to form the product GSA.</text>
</comment>
<comment type="similarity">
    <text evidence="1">Belongs to the glutamyl-tRNA reductase family.</text>
</comment>
<gene>
    <name evidence="1" type="primary">hemA</name>
    <name type="ordered locus">Fphi_1071</name>
</gene>
<organism>
    <name type="scientific">Francisella philomiragia subsp. philomiragia (strain ATCC 25017 / CCUG 19701 / FSC 153 / O#319-036)</name>
    <dbReference type="NCBI Taxonomy" id="484022"/>
    <lineage>
        <taxon>Bacteria</taxon>
        <taxon>Pseudomonadati</taxon>
        <taxon>Pseudomonadota</taxon>
        <taxon>Gammaproteobacteria</taxon>
        <taxon>Thiotrichales</taxon>
        <taxon>Francisellaceae</taxon>
        <taxon>Francisella</taxon>
    </lineage>
</organism>
<name>HEM1_FRAP2</name>
<evidence type="ECO:0000255" key="1">
    <source>
        <dbReference type="HAMAP-Rule" id="MF_00087"/>
    </source>
</evidence>
<reference key="1">
    <citation type="submission" date="2007-12" db="EMBL/GenBank/DDBJ databases">
        <title>Complete sequence of chromosome of Francisella philomiragia subsp. philomiragia ATCC 25017.</title>
        <authorList>
            <consortium name="US DOE Joint Genome Institute"/>
            <person name="Copeland A."/>
            <person name="Lucas S."/>
            <person name="Lapidus A."/>
            <person name="Barry K."/>
            <person name="Detter J.C."/>
            <person name="Glavina del Rio T."/>
            <person name="Hammon N."/>
            <person name="Israni S."/>
            <person name="Dalin E."/>
            <person name="Tice H."/>
            <person name="Pitluck S."/>
            <person name="Chain P."/>
            <person name="Malfatti S."/>
            <person name="Shin M."/>
            <person name="Vergez L."/>
            <person name="Schmutz J."/>
            <person name="Larimer F."/>
            <person name="Land M."/>
            <person name="Hauser L."/>
            <person name="Richardson P."/>
        </authorList>
    </citation>
    <scope>NUCLEOTIDE SEQUENCE [LARGE SCALE GENOMIC DNA]</scope>
    <source>
        <strain>ATCC 25017 / CCUG 19701 / FSC 153 / O#319-036</strain>
    </source>
</reference>
<protein>
    <recommendedName>
        <fullName evidence="1">Glutamyl-tRNA reductase</fullName>
        <shortName evidence="1">GluTR</shortName>
        <ecNumber evidence="1">1.2.1.70</ecNumber>
    </recommendedName>
</protein>
<proteinExistence type="inferred from homology"/>
<dbReference type="EC" id="1.2.1.70" evidence="1"/>
<dbReference type="EMBL" id="CP000937">
    <property type="protein sequence ID" value="ABZ87294.1"/>
    <property type="molecule type" value="Genomic_DNA"/>
</dbReference>
<dbReference type="SMR" id="B0TX36"/>
<dbReference type="KEGG" id="fph:Fphi_1071"/>
<dbReference type="eggNOG" id="COG0373">
    <property type="taxonomic scope" value="Bacteria"/>
</dbReference>
<dbReference type="HOGENOM" id="CLU_035113_2_2_6"/>
<dbReference type="UniPathway" id="UPA00251">
    <property type="reaction ID" value="UER00316"/>
</dbReference>
<dbReference type="GO" id="GO:0008883">
    <property type="term" value="F:glutamyl-tRNA reductase activity"/>
    <property type="evidence" value="ECO:0007669"/>
    <property type="project" value="UniProtKB-UniRule"/>
</dbReference>
<dbReference type="GO" id="GO:0050661">
    <property type="term" value="F:NADP binding"/>
    <property type="evidence" value="ECO:0007669"/>
    <property type="project" value="InterPro"/>
</dbReference>
<dbReference type="GO" id="GO:0019353">
    <property type="term" value="P:protoporphyrinogen IX biosynthetic process from glutamate"/>
    <property type="evidence" value="ECO:0007669"/>
    <property type="project" value="TreeGrafter"/>
</dbReference>
<dbReference type="CDD" id="cd05213">
    <property type="entry name" value="NAD_bind_Glutamyl_tRNA_reduct"/>
    <property type="match status" value="1"/>
</dbReference>
<dbReference type="FunFam" id="3.30.460.30:FF:000001">
    <property type="entry name" value="Glutamyl-tRNA reductase"/>
    <property type="match status" value="1"/>
</dbReference>
<dbReference type="Gene3D" id="3.30.460.30">
    <property type="entry name" value="Glutamyl-tRNA reductase, N-terminal domain"/>
    <property type="match status" value="1"/>
</dbReference>
<dbReference type="Gene3D" id="3.40.50.720">
    <property type="entry name" value="NAD(P)-binding Rossmann-like Domain"/>
    <property type="match status" value="1"/>
</dbReference>
<dbReference type="HAMAP" id="MF_00087">
    <property type="entry name" value="Glu_tRNA_reductase"/>
    <property type="match status" value="1"/>
</dbReference>
<dbReference type="InterPro" id="IPR000343">
    <property type="entry name" value="4pyrrol_synth_GluRdtase"/>
</dbReference>
<dbReference type="InterPro" id="IPR015896">
    <property type="entry name" value="4pyrrol_synth_GluRdtase_dimer"/>
</dbReference>
<dbReference type="InterPro" id="IPR015895">
    <property type="entry name" value="4pyrrol_synth_GluRdtase_N"/>
</dbReference>
<dbReference type="InterPro" id="IPR018214">
    <property type="entry name" value="GluRdtase_CS"/>
</dbReference>
<dbReference type="InterPro" id="IPR036453">
    <property type="entry name" value="GluRdtase_dimer_dom_sf"/>
</dbReference>
<dbReference type="InterPro" id="IPR036343">
    <property type="entry name" value="GluRdtase_N_sf"/>
</dbReference>
<dbReference type="InterPro" id="IPR036291">
    <property type="entry name" value="NAD(P)-bd_dom_sf"/>
</dbReference>
<dbReference type="InterPro" id="IPR006151">
    <property type="entry name" value="Shikm_DH/Glu-tRNA_Rdtase"/>
</dbReference>
<dbReference type="NCBIfam" id="TIGR01035">
    <property type="entry name" value="hemA"/>
    <property type="match status" value="1"/>
</dbReference>
<dbReference type="NCBIfam" id="NF010548">
    <property type="entry name" value="PRK13940.1"/>
    <property type="match status" value="1"/>
</dbReference>
<dbReference type="PANTHER" id="PTHR43013">
    <property type="entry name" value="GLUTAMYL-TRNA REDUCTASE"/>
    <property type="match status" value="1"/>
</dbReference>
<dbReference type="PANTHER" id="PTHR43013:SF1">
    <property type="entry name" value="GLUTAMYL-TRNA REDUCTASE"/>
    <property type="match status" value="1"/>
</dbReference>
<dbReference type="Pfam" id="PF00745">
    <property type="entry name" value="GlutR_dimer"/>
    <property type="match status" value="1"/>
</dbReference>
<dbReference type="Pfam" id="PF05201">
    <property type="entry name" value="GlutR_N"/>
    <property type="match status" value="1"/>
</dbReference>
<dbReference type="Pfam" id="PF01488">
    <property type="entry name" value="Shikimate_DH"/>
    <property type="match status" value="1"/>
</dbReference>
<dbReference type="PIRSF" id="PIRSF000445">
    <property type="entry name" value="4pyrrol_synth_GluRdtase"/>
    <property type="match status" value="1"/>
</dbReference>
<dbReference type="SUPFAM" id="SSF69742">
    <property type="entry name" value="Glutamyl tRNA-reductase catalytic, N-terminal domain"/>
    <property type="match status" value="1"/>
</dbReference>
<dbReference type="SUPFAM" id="SSF69075">
    <property type="entry name" value="Glutamyl tRNA-reductase dimerization domain"/>
    <property type="match status" value="1"/>
</dbReference>
<dbReference type="SUPFAM" id="SSF51735">
    <property type="entry name" value="NAD(P)-binding Rossmann-fold domains"/>
    <property type="match status" value="1"/>
</dbReference>
<dbReference type="PROSITE" id="PS00747">
    <property type="entry name" value="GLUTR"/>
    <property type="match status" value="1"/>
</dbReference>
<sequence>MALISLAIDYKKSPIEVRSEFALSGLDVSMLYKSILAIDNVVHAVILSTCNRTEVYLEITDLRVVDDILAWWQSYVRNPEFKIRDYFKLRQGTEVIMHLMKLACGLESMVLGEPQILGQVKDSYTLSKKNHAIGKELDRVFQKVFATAKKVRSETRIGHCPVSVAFSAITLAKKQLDNISTKNVLIIGAGQTGELLFRHVTALNPKHIMLANRTIEKAEKITSTFNNASAYYLSDLPKLIKKADIIIAAVNVTEYIVKCEDVGEKSRVFIDISIPQALDPKLGDLEQNAYYCVDDINTVIEGNKDKRKHESSRAQKIIVKSLEDYLEKEKAIISNSAIKELFQKADGLVDLSLEKSLAKIRNGKDPEEVLKRFAYEIKKKVLHYPVVGMKEASKQGRSDCLVCMKRMFGLNVEK</sequence>
<feature type="chain" id="PRO_1000075409" description="Glutamyl-tRNA reductase">
    <location>
        <begin position="1"/>
        <end position="414"/>
    </location>
</feature>
<feature type="active site" description="Nucleophile" evidence="1">
    <location>
        <position position="50"/>
    </location>
</feature>
<feature type="binding site" evidence="1">
    <location>
        <begin position="49"/>
        <end position="52"/>
    </location>
    <ligand>
        <name>substrate</name>
    </ligand>
</feature>
<feature type="binding site" evidence="1">
    <location>
        <position position="108"/>
    </location>
    <ligand>
        <name>substrate</name>
    </ligand>
</feature>
<feature type="binding site" evidence="1">
    <location>
        <begin position="113"/>
        <end position="115"/>
    </location>
    <ligand>
        <name>substrate</name>
    </ligand>
</feature>
<feature type="binding site" evidence="1">
    <location>
        <position position="119"/>
    </location>
    <ligand>
        <name>substrate</name>
    </ligand>
</feature>
<feature type="binding site" evidence="1">
    <location>
        <begin position="188"/>
        <end position="193"/>
    </location>
    <ligand>
        <name>NADP(+)</name>
        <dbReference type="ChEBI" id="CHEBI:58349"/>
    </ligand>
</feature>
<feature type="site" description="Important for activity" evidence="1">
    <location>
        <position position="98"/>
    </location>
</feature>
<keyword id="KW-0521">NADP</keyword>
<keyword id="KW-0560">Oxidoreductase</keyword>
<keyword id="KW-0627">Porphyrin biosynthesis</keyword>